<sequence>MNQTNKGEGQTAPQKESMGQILWQLTRPHTLTASFVPVLLGTVLAMFYVKVDLLLFLAMLFSCLWIQIATNLFNEYYDFKRGLDTAESVGIGGAIVRHGMKPKTILQLALASYGIAILLGVYICASSSWWLALIGLVGMAIGYLYTGGPLPIAYTPFGELFSGICMGSVFVLISFFIQTDKINMQSILISIPIAILVGAINLSNNIRDIEEDKKGGRKTLAILMGHKGAVTLLAASFAVAYIWVVGLVITGAASPWLFVVFLSVPKPVQAVKGFVQNEMPMNMIVAMKSTAQTNTFFGFLLSIGLLISYFR</sequence>
<reference key="1">
    <citation type="journal article" date="1993" name="Mol. Microbiol.">
        <title>Bacillus subtilis genome project: cloning and sequencing of the 97 kb region from 325 degrees to 333 degrees.</title>
        <authorList>
            <person name="Glaser P."/>
            <person name="Kunst F."/>
            <person name="Arnaud M."/>
            <person name="Coudart M.P."/>
            <person name="Gonzales W."/>
            <person name="Hullo M.-F."/>
            <person name="Ionescu M."/>
            <person name="Lubochinsky B."/>
            <person name="Marcelino L."/>
            <person name="Moszer I."/>
            <person name="Presecan E."/>
            <person name="Santana M."/>
            <person name="Schneider E."/>
            <person name="Schweizer J."/>
            <person name="Vertes A."/>
            <person name="Rapoport G."/>
            <person name="Danchin A."/>
        </authorList>
    </citation>
    <scope>NUCLEOTIDE SEQUENCE [GENOMIC DNA]</scope>
    <source>
        <strain>168</strain>
    </source>
</reference>
<reference key="2">
    <citation type="journal article" date="1997" name="Nature">
        <title>The complete genome sequence of the Gram-positive bacterium Bacillus subtilis.</title>
        <authorList>
            <person name="Kunst F."/>
            <person name="Ogasawara N."/>
            <person name="Moszer I."/>
            <person name="Albertini A.M."/>
            <person name="Alloni G."/>
            <person name="Azevedo V."/>
            <person name="Bertero M.G."/>
            <person name="Bessieres P."/>
            <person name="Bolotin A."/>
            <person name="Borchert S."/>
            <person name="Borriss R."/>
            <person name="Boursier L."/>
            <person name="Brans A."/>
            <person name="Braun M."/>
            <person name="Brignell S.C."/>
            <person name="Bron S."/>
            <person name="Brouillet S."/>
            <person name="Bruschi C.V."/>
            <person name="Caldwell B."/>
            <person name="Capuano V."/>
            <person name="Carter N.M."/>
            <person name="Choi S.-K."/>
            <person name="Codani J.-J."/>
            <person name="Connerton I.F."/>
            <person name="Cummings N.J."/>
            <person name="Daniel R.A."/>
            <person name="Denizot F."/>
            <person name="Devine K.M."/>
            <person name="Duesterhoeft A."/>
            <person name="Ehrlich S.D."/>
            <person name="Emmerson P.T."/>
            <person name="Entian K.-D."/>
            <person name="Errington J."/>
            <person name="Fabret C."/>
            <person name="Ferrari E."/>
            <person name="Foulger D."/>
            <person name="Fritz C."/>
            <person name="Fujita M."/>
            <person name="Fujita Y."/>
            <person name="Fuma S."/>
            <person name="Galizzi A."/>
            <person name="Galleron N."/>
            <person name="Ghim S.-Y."/>
            <person name="Glaser P."/>
            <person name="Goffeau A."/>
            <person name="Golightly E.J."/>
            <person name="Grandi G."/>
            <person name="Guiseppi G."/>
            <person name="Guy B.J."/>
            <person name="Haga K."/>
            <person name="Haiech J."/>
            <person name="Harwood C.R."/>
            <person name="Henaut A."/>
            <person name="Hilbert H."/>
            <person name="Holsappel S."/>
            <person name="Hosono S."/>
            <person name="Hullo M.-F."/>
            <person name="Itaya M."/>
            <person name="Jones L.-M."/>
            <person name="Joris B."/>
            <person name="Karamata D."/>
            <person name="Kasahara Y."/>
            <person name="Klaerr-Blanchard M."/>
            <person name="Klein C."/>
            <person name="Kobayashi Y."/>
            <person name="Koetter P."/>
            <person name="Koningstein G."/>
            <person name="Krogh S."/>
            <person name="Kumano M."/>
            <person name="Kurita K."/>
            <person name="Lapidus A."/>
            <person name="Lardinois S."/>
            <person name="Lauber J."/>
            <person name="Lazarevic V."/>
            <person name="Lee S.-M."/>
            <person name="Levine A."/>
            <person name="Liu H."/>
            <person name="Masuda S."/>
            <person name="Mauel C."/>
            <person name="Medigue C."/>
            <person name="Medina N."/>
            <person name="Mellado R.P."/>
            <person name="Mizuno M."/>
            <person name="Moestl D."/>
            <person name="Nakai S."/>
            <person name="Noback M."/>
            <person name="Noone D."/>
            <person name="O'Reilly M."/>
            <person name="Ogawa K."/>
            <person name="Ogiwara A."/>
            <person name="Oudega B."/>
            <person name="Park S.-H."/>
            <person name="Parro V."/>
            <person name="Pohl T.M."/>
            <person name="Portetelle D."/>
            <person name="Porwollik S."/>
            <person name="Prescott A.M."/>
            <person name="Presecan E."/>
            <person name="Pujic P."/>
            <person name="Purnelle B."/>
            <person name="Rapoport G."/>
            <person name="Rey M."/>
            <person name="Reynolds S."/>
            <person name="Rieger M."/>
            <person name="Rivolta C."/>
            <person name="Rocha E."/>
            <person name="Roche B."/>
            <person name="Rose M."/>
            <person name="Sadaie Y."/>
            <person name="Sato T."/>
            <person name="Scanlan E."/>
            <person name="Schleich S."/>
            <person name="Schroeter R."/>
            <person name="Scoffone F."/>
            <person name="Sekiguchi J."/>
            <person name="Sekowska A."/>
            <person name="Seror S.J."/>
            <person name="Serror P."/>
            <person name="Shin B.-S."/>
            <person name="Soldo B."/>
            <person name="Sorokin A."/>
            <person name="Tacconi E."/>
            <person name="Takagi T."/>
            <person name="Takahashi H."/>
            <person name="Takemaru K."/>
            <person name="Takeuchi M."/>
            <person name="Tamakoshi A."/>
            <person name="Tanaka T."/>
            <person name="Terpstra P."/>
            <person name="Tognoni A."/>
            <person name="Tosato V."/>
            <person name="Uchiyama S."/>
            <person name="Vandenbol M."/>
            <person name="Vannier F."/>
            <person name="Vassarotti A."/>
            <person name="Viari A."/>
            <person name="Wambutt R."/>
            <person name="Wedler E."/>
            <person name="Wedler H."/>
            <person name="Weitzenegger T."/>
            <person name="Winters P."/>
            <person name="Wipat A."/>
            <person name="Yamamoto H."/>
            <person name="Yamane K."/>
            <person name="Yasumoto K."/>
            <person name="Yata K."/>
            <person name="Yoshida K."/>
            <person name="Yoshikawa H.-F."/>
            <person name="Zumstein E."/>
            <person name="Yoshikawa H."/>
            <person name="Danchin A."/>
        </authorList>
    </citation>
    <scope>NUCLEOTIDE SEQUENCE [LARGE SCALE GENOMIC DNA]</scope>
    <source>
        <strain>168</strain>
    </source>
</reference>
<dbReference type="EC" id="2.5.1.74" evidence="1"/>
<dbReference type="EMBL" id="X73124">
    <property type="protein sequence ID" value="CAA51562.1"/>
    <property type="molecule type" value="Genomic_DNA"/>
</dbReference>
<dbReference type="EMBL" id="AL009126">
    <property type="protein sequence ID" value="CAB15875.1"/>
    <property type="molecule type" value="Genomic_DNA"/>
</dbReference>
<dbReference type="PIR" id="S39661">
    <property type="entry name" value="S39661"/>
</dbReference>
<dbReference type="RefSeq" id="NP_391728.1">
    <property type="nucleotide sequence ID" value="NC_000964.3"/>
</dbReference>
<dbReference type="RefSeq" id="WP_009968370.1">
    <property type="nucleotide sequence ID" value="NZ_OZ025638.1"/>
</dbReference>
<dbReference type="SMR" id="P39582"/>
<dbReference type="FunCoup" id="P39582">
    <property type="interactions" value="575"/>
</dbReference>
<dbReference type="IntAct" id="P39582">
    <property type="interactions" value="1"/>
</dbReference>
<dbReference type="STRING" id="224308.BSU38490"/>
<dbReference type="PaxDb" id="224308-BSU38490"/>
<dbReference type="EnsemblBacteria" id="CAB15875">
    <property type="protein sequence ID" value="CAB15875"/>
    <property type="gene ID" value="BSU_38490"/>
</dbReference>
<dbReference type="GeneID" id="937356"/>
<dbReference type="KEGG" id="bsu:BSU38490"/>
<dbReference type="PATRIC" id="fig|224308.179.peg.4166"/>
<dbReference type="eggNOG" id="COG1575">
    <property type="taxonomic scope" value="Bacteria"/>
</dbReference>
<dbReference type="InParanoid" id="P39582"/>
<dbReference type="OrthoDB" id="9767568at2"/>
<dbReference type="PhylomeDB" id="P39582"/>
<dbReference type="BioCyc" id="BSUB:BSU38490-MONOMER"/>
<dbReference type="BioCyc" id="MetaCyc:MONOMER-13813"/>
<dbReference type="UniPathway" id="UPA00079">
    <property type="reaction ID" value="UER00168"/>
</dbReference>
<dbReference type="Proteomes" id="UP000001570">
    <property type="component" value="Chromosome"/>
</dbReference>
<dbReference type="GO" id="GO:0005886">
    <property type="term" value="C:plasma membrane"/>
    <property type="evidence" value="ECO:0007669"/>
    <property type="project" value="UniProtKB-SubCell"/>
</dbReference>
<dbReference type="GO" id="GO:0046428">
    <property type="term" value="F:1,4-dihydroxy-2-naphthoate polyprenyltransferase activity"/>
    <property type="evidence" value="ECO:0007669"/>
    <property type="project" value="UniProtKB-UniRule"/>
</dbReference>
<dbReference type="GO" id="GO:0004659">
    <property type="term" value="F:prenyltransferase activity"/>
    <property type="evidence" value="ECO:0000318"/>
    <property type="project" value="GO_Central"/>
</dbReference>
<dbReference type="GO" id="GO:0009234">
    <property type="term" value="P:menaquinone biosynthetic process"/>
    <property type="evidence" value="ECO:0000318"/>
    <property type="project" value="GO_Central"/>
</dbReference>
<dbReference type="GO" id="GO:0042371">
    <property type="term" value="P:vitamin K biosynthetic process"/>
    <property type="evidence" value="ECO:0000318"/>
    <property type="project" value="GO_Central"/>
</dbReference>
<dbReference type="CDD" id="cd13962">
    <property type="entry name" value="PT_UbiA_UBIAD1"/>
    <property type="match status" value="1"/>
</dbReference>
<dbReference type="FunFam" id="1.10.357.140:FF:000007">
    <property type="entry name" value="1,4-dihydroxy-2-naphthoate octaprenyltransferase"/>
    <property type="match status" value="1"/>
</dbReference>
<dbReference type="FunFam" id="1.20.120.1780:FF:000002">
    <property type="entry name" value="1,4-dihydroxy-2-naphthoate octaprenyltransferase"/>
    <property type="match status" value="1"/>
</dbReference>
<dbReference type="Gene3D" id="1.10.357.140">
    <property type="entry name" value="UbiA prenyltransferase"/>
    <property type="match status" value="1"/>
</dbReference>
<dbReference type="Gene3D" id="1.20.120.1780">
    <property type="entry name" value="UbiA prenyltransferase"/>
    <property type="match status" value="1"/>
</dbReference>
<dbReference type="HAMAP" id="MF_01937">
    <property type="entry name" value="MenA_1"/>
    <property type="match status" value="1"/>
</dbReference>
<dbReference type="InterPro" id="IPR004657">
    <property type="entry name" value="MenA"/>
</dbReference>
<dbReference type="InterPro" id="IPR000537">
    <property type="entry name" value="UbiA_prenyltransferase"/>
</dbReference>
<dbReference type="InterPro" id="IPR044878">
    <property type="entry name" value="UbiA_sf"/>
</dbReference>
<dbReference type="InterPro" id="IPR026046">
    <property type="entry name" value="UBIAD1"/>
</dbReference>
<dbReference type="NCBIfam" id="TIGR00751">
    <property type="entry name" value="menA"/>
    <property type="match status" value="1"/>
</dbReference>
<dbReference type="NCBIfam" id="NF004749">
    <property type="entry name" value="PRK06080.1-1"/>
    <property type="match status" value="1"/>
</dbReference>
<dbReference type="NCBIfam" id="NF009926">
    <property type="entry name" value="PRK13387.1"/>
    <property type="match status" value="1"/>
</dbReference>
<dbReference type="PANTHER" id="PTHR13929">
    <property type="entry name" value="1,4-DIHYDROXY-2-NAPHTHOATE OCTAPRENYLTRANSFERASE"/>
    <property type="match status" value="1"/>
</dbReference>
<dbReference type="PANTHER" id="PTHR13929:SF0">
    <property type="entry name" value="UBIA PRENYLTRANSFERASE DOMAIN-CONTAINING PROTEIN 1"/>
    <property type="match status" value="1"/>
</dbReference>
<dbReference type="Pfam" id="PF01040">
    <property type="entry name" value="UbiA"/>
    <property type="match status" value="1"/>
</dbReference>
<dbReference type="PIRSF" id="PIRSF005355">
    <property type="entry name" value="UBIAD1"/>
    <property type="match status" value="1"/>
</dbReference>
<name>MENA_BACSU</name>
<comment type="function">
    <text evidence="1">Conversion of 1,4-dihydroxy-2-naphthoate (DHNA) to demethylmenaquinone (DMK).</text>
</comment>
<comment type="catalytic activity">
    <reaction evidence="1">
        <text>an all-trans-polyprenyl diphosphate + 1,4-dihydroxy-2-naphthoate + H(+) = a 2-demethylmenaquinol + CO2 + diphosphate</text>
        <dbReference type="Rhea" id="RHEA:26478"/>
        <dbReference type="Rhea" id="RHEA-COMP:9563"/>
        <dbReference type="Rhea" id="RHEA-COMP:9564"/>
        <dbReference type="ChEBI" id="CHEBI:11173"/>
        <dbReference type="ChEBI" id="CHEBI:15378"/>
        <dbReference type="ChEBI" id="CHEBI:16526"/>
        <dbReference type="ChEBI" id="CHEBI:33019"/>
        <dbReference type="ChEBI" id="CHEBI:55437"/>
        <dbReference type="ChEBI" id="CHEBI:58914"/>
        <dbReference type="EC" id="2.5.1.74"/>
    </reaction>
</comment>
<comment type="pathway">
    <text evidence="1">Quinol/quinone metabolism; menaquinone biosynthesis; menaquinol from 1,4-dihydroxy-2-naphthoate: step 1/2.</text>
</comment>
<comment type="subcellular location">
    <subcellularLocation>
        <location evidence="1">Cell membrane</location>
        <topology evidence="1">Multi-pass membrane protein</topology>
    </subcellularLocation>
</comment>
<comment type="similarity">
    <text evidence="1">Belongs to the MenA family. Type 1 subfamily.</text>
</comment>
<organism>
    <name type="scientific">Bacillus subtilis (strain 168)</name>
    <dbReference type="NCBI Taxonomy" id="224308"/>
    <lineage>
        <taxon>Bacteria</taxon>
        <taxon>Bacillati</taxon>
        <taxon>Bacillota</taxon>
        <taxon>Bacilli</taxon>
        <taxon>Bacillales</taxon>
        <taxon>Bacillaceae</taxon>
        <taxon>Bacillus</taxon>
    </lineage>
</organism>
<evidence type="ECO:0000255" key="1">
    <source>
        <dbReference type="HAMAP-Rule" id="MF_01937"/>
    </source>
</evidence>
<accession>P39582</accession>
<keyword id="KW-1003">Cell membrane</keyword>
<keyword id="KW-0472">Membrane</keyword>
<keyword id="KW-0474">Menaquinone biosynthesis</keyword>
<keyword id="KW-1185">Reference proteome</keyword>
<keyword id="KW-0808">Transferase</keyword>
<keyword id="KW-0812">Transmembrane</keyword>
<keyword id="KW-1133">Transmembrane helix</keyword>
<feature type="chain" id="PRO_0000096413" description="1,4-dihydroxy-2-naphthoate octaprenyltransferase">
    <location>
        <begin position="1"/>
        <end position="311"/>
    </location>
</feature>
<feature type="transmembrane region" description="Helical" evidence="1">
    <location>
        <begin position="31"/>
        <end position="51"/>
    </location>
</feature>
<feature type="transmembrane region" description="Helical" evidence="1">
    <location>
        <begin position="53"/>
        <end position="73"/>
    </location>
</feature>
<feature type="transmembrane region" description="Helical" evidence="1">
    <location>
        <begin position="104"/>
        <end position="126"/>
    </location>
</feature>
<feature type="transmembrane region" description="Helical" evidence="1">
    <location>
        <begin position="131"/>
        <end position="153"/>
    </location>
</feature>
<feature type="transmembrane region" description="Helical" evidence="1">
    <location>
        <begin position="157"/>
        <end position="177"/>
    </location>
</feature>
<feature type="transmembrane region" description="Helical" evidence="1">
    <location>
        <begin position="182"/>
        <end position="202"/>
    </location>
</feature>
<feature type="transmembrane region" description="Helical" evidence="1">
    <location>
        <begin position="220"/>
        <end position="240"/>
    </location>
</feature>
<feature type="transmembrane region" description="Helical" evidence="1">
    <location>
        <begin position="242"/>
        <end position="262"/>
    </location>
</feature>
<feature type="transmembrane region" description="Helical" evidence="1">
    <location>
        <begin position="290"/>
        <end position="310"/>
    </location>
</feature>
<proteinExistence type="inferred from homology"/>
<protein>
    <recommendedName>
        <fullName evidence="1">1,4-dihydroxy-2-naphthoate octaprenyltransferase</fullName>
        <shortName evidence="1">DHNA-octaprenyltransferase</shortName>
        <ecNumber evidence="1">2.5.1.74</ecNumber>
    </recommendedName>
</protein>
<gene>
    <name evidence="1" type="primary">menA</name>
    <name type="synonym">ywaB</name>
    <name type="ordered locus">BSU38490</name>
    <name type="ORF">ipa-6d</name>
</gene>